<feature type="chain" id="PRO_1000114848" description="Phenylalanine--tRNA ligase alpha subunit">
    <location>
        <begin position="1"/>
        <end position="344"/>
    </location>
</feature>
<feature type="binding site" evidence="1">
    <location>
        <position position="256"/>
    </location>
    <ligand>
        <name>Mg(2+)</name>
        <dbReference type="ChEBI" id="CHEBI:18420"/>
        <note>shared with beta subunit</note>
    </ligand>
</feature>
<comment type="catalytic activity">
    <reaction evidence="1">
        <text>tRNA(Phe) + L-phenylalanine + ATP = L-phenylalanyl-tRNA(Phe) + AMP + diphosphate + H(+)</text>
        <dbReference type="Rhea" id="RHEA:19413"/>
        <dbReference type="Rhea" id="RHEA-COMP:9668"/>
        <dbReference type="Rhea" id="RHEA-COMP:9699"/>
        <dbReference type="ChEBI" id="CHEBI:15378"/>
        <dbReference type="ChEBI" id="CHEBI:30616"/>
        <dbReference type="ChEBI" id="CHEBI:33019"/>
        <dbReference type="ChEBI" id="CHEBI:58095"/>
        <dbReference type="ChEBI" id="CHEBI:78442"/>
        <dbReference type="ChEBI" id="CHEBI:78531"/>
        <dbReference type="ChEBI" id="CHEBI:456215"/>
        <dbReference type="EC" id="6.1.1.20"/>
    </reaction>
</comment>
<comment type="cofactor">
    <cofactor evidence="1">
        <name>Mg(2+)</name>
        <dbReference type="ChEBI" id="CHEBI:18420"/>
    </cofactor>
    <text evidence="1">Binds 2 magnesium ions per tetramer.</text>
</comment>
<comment type="subunit">
    <text evidence="1">Tetramer of two alpha and two beta subunits.</text>
</comment>
<comment type="subcellular location">
    <subcellularLocation>
        <location evidence="1">Cytoplasm</location>
    </subcellularLocation>
</comment>
<comment type="similarity">
    <text evidence="1">Belongs to the class-II aminoacyl-tRNA synthetase family. Phe-tRNA synthetase alpha subunit type 1 subfamily.</text>
</comment>
<reference key="1">
    <citation type="journal article" date="2008" name="Chem. Biol. Interact.">
        <title>Extending the Bacillus cereus group genomics to putative food-borne pathogens of different toxicity.</title>
        <authorList>
            <person name="Lapidus A."/>
            <person name="Goltsman E."/>
            <person name="Auger S."/>
            <person name="Galleron N."/>
            <person name="Segurens B."/>
            <person name="Dossat C."/>
            <person name="Land M.L."/>
            <person name="Broussolle V."/>
            <person name="Brillard J."/>
            <person name="Guinebretiere M.-H."/>
            <person name="Sanchis V."/>
            <person name="Nguen-the C."/>
            <person name="Lereclus D."/>
            <person name="Richardson P."/>
            <person name="Wincker P."/>
            <person name="Weissenbach J."/>
            <person name="Ehrlich S.D."/>
            <person name="Sorokin A."/>
        </authorList>
    </citation>
    <scope>NUCLEOTIDE SEQUENCE [LARGE SCALE GENOMIC DNA]</scope>
    <source>
        <strain>KBAB4</strain>
    </source>
</reference>
<sequence>MEARLKELKQKALELIEEAKELKGLNDVRVAYLGKKGPITEVLRGMGKLSAEERPRMGALVNEVREAIQTRLEDKIGNLEKAVIEAKLATETIDVTLPGRPVETGCHHPLTAVVEQIEDVFIGMGYEVAEGTEVEKDYYNFEALNLPKDHPARDMQDTFYITEETLLRTHTSSVQARTMEKNKEKGPIKIICPGKVYRRDDDDATHSHQFMQIEGLVIDKNIRMSDLKGTLQVFVKKMFGEDREIRLRPSFFPFTEPSVEMDISCMMCHGKGCGTCKGTGWIEILGAGMVHPNVLEMAGYDSKEYQGFAFGMGAERIAMLKYGVDDIRHFYTNDVRFLQQFKRA</sequence>
<name>SYFA_BACMK</name>
<evidence type="ECO:0000255" key="1">
    <source>
        <dbReference type="HAMAP-Rule" id="MF_00281"/>
    </source>
</evidence>
<keyword id="KW-0030">Aminoacyl-tRNA synthetase</keyword>
<keyword id="KW-0067">ATP-binding</keyword>
<keyword id="KW-0963">Cytoplasm</keyword>
<keyword id="KW-0436">Ligase</keyword>
<keyword id="KW-0460">Magnesium</keyword>
<keyword id="KW-0479">Metal-binding</keyword>
<keyword id="KW-0547">Nucleotide-binding</keyword>
<keyword id="KW-0648">Protein biosynthesis</keyword>
<organism>
    <name type="scientific">Bacillus mycoides (strain KBAB4)</name>
    <name type="common">Bacillus weihenstephanensis</name>
    <dbReference type="NCBI Taxonomy" id="315730"/>
    <lineage>
        <taxon>Bacteria</taxon>
        <taxon>Bacillati</taxon>
        <taxon>Bacillota</taxon>
        <taxon>Bacilli</taxon>
        <taxon>Bacillales</taxon>
        <taxon>Bacillaceae</taxon>
        <taxon>Bacillus</taxon>
        <taxon>Bacillus cereus group</taxon>
    </lineage>
</organism>
<protein>
    <recommendedName>
        <fullName evidence="1">Phenylalanine--tRNA ligase alpha subunit</fullName>
        <ecNumber evidence="1">6.1.1.20</ecNumber>
    </recommendedName>
    <alternativeName>
        <fullName evidence="1">Phenylalanyl-tRNA synthetase alpha subunit</fullName>
        <shortName evidence="1">PheRS</shortName>
    </alternativeName>
</protein>
<accession>A9VJM4</accession>
<gene>
    <name evidence="1" type="primary">pheS</name>
    <name type="ordered locus">BcerKBAB4_4392</name>
</gene>
<dbReference type="EC" id="6.1.1.20" evidence="1"/>
<dbReference type="EMBL" id="CP000903">
    <property type="protein sequence ID" value="ABY45551.1"/>
    <property type="molecule type" value="Genomic_DNA"/>
</dbReference>
<dbReference type="RefSeq" id="WP_002015457.1">
    <property type="nucleotide sequence ID" value="NC_010184.1"/>
</dbReference>
<dbReference type="SMR" id="A9VJM4"/>
<dbReference type="GeneID" id="66265884"/>
<dbReference type="KEGG" id="bwe:BcerKBAB4_4392"/>
<dbReference type="eggNOG" id="COG0016">
    <property type="taxonomic scope" value="Bacteria"/>
</dbReference>
<dbReference type="HOGENOM" id="CLU_025086_0_1_9"/>
<dbReference type="Proteomes" id="UP000002154">
    <property type="component" value="Chromosome"/>
</dbReference>
<dbReference type="GO" id="GO:0005737">
    <property type="term" value="C:cytoplasm"/>
    <property type="evidence" value="ECO:0007669"/>
    <property type="project" value="UniProtKB-SubCell"/>
</dbReference>
<dbReference type="GO" id="GO:0005524">
    <property type="term" value="F:ATP binding"/>
    <property type="evidence" value="ECO:0007669"/>
    <property type="project" value="UniProtKB-UniRule"/>
</dbReference>
<dbReference type="GO" id="GO:0140096">
    <property type="term" value="F:catalytic activity, acting on a protein"/>
    <property type="evidence" value="ECO:0007669"/>
    <property type="project" value="UniProtKB-ARBA"/>
</dbReference>
<dbReference type="GO" id="GO:0000287">
    <property type="term" value="F:magnesium ion binding"/>
    <property type="evidence" value="ECO:0007669"/>
    <property type="project" value="UniProtKB-UniRule"/>
</dbReference>
<dbReference type="GO" id="GO:0004826">
    <property type="term" value="F:phenylalanine-tRNA ligase activity"/>
    <property type="evidence" value="ECO:0007669"/>
    <property type="project" value="UniProtKB-UniRule"/>
</dbReference>
<dbReference type="GO" id="GO:0016740">
    <property type="term" value="F:transferase activity"/>
    <property type="evidence" value="ECO:0007669"/>
    <property type="project" value="UniProtKB-ARBA"/>
</dbReference>
<dbReference type="GO" id="GO:0000049">
    <property type="term" value="F:tRNA binding"/>
    <property type="evidence" value="ECO:0007669"/>
    <property type="project" value="InterPro"/>
</dbReference>
<dbReference type="GO" id="GO:0006432">
    <property type="term" value="P:phenylalanyl-tRNA aminoacylation"/>
    <property type="evidence" value="ECO:0007669"/>
    <property type="project" value="UniProtKB-UniRule"/>
</dbReference>
<dbReference type="CDD" id="cd00496">
    <property type="entry name" value="PheRS_alpha_core"/>
    <property type="match status" value="1"/>
</dbReference>
<dbReference type="FunFam" id="3.30.930.10:FF:000003">
    <property type="entry name" value="Phenylalanine--tRNA ligase alpha subunit"/>
    <property type="match status" value="1"/>
</dbReference>
<dbReference type="Gene3D" id="3.30.930.10">
    <property type="entry name" value="Bira Bifunctional Protein, Domain 2"/>
    <property type="match status" value="1"/>
</dbReference>
<dbReference type="HAMAP" id="MF_00281">
    <property type="entry name" value="Phe_tRNA_synth_alpha1"/>
    <property type="match status" value="1"/>
</dbReference>
<dbReference type="InterPro" id="IPR006195">
    <property type="entry name" value="aa-tRNA-synth_II"/>
</dbReference>
<dbReference type="InterPro" id="IPR045864">
    <property type="entry name" value="aa-tRNA-synth_II/BPL/LPL"/>
</dbReference>
<dbReference type="InterPro" id="IPR004529">
    <property type="entry name" value="Phe-tRNA-synth_IIc_asu"/>
</dbReference>
<dbReference type="InterPro" id="IPR004188">
    <property type="entry name" value="Phe-tRNA_ligase_II_N"/>
</dbReference>
<dbReference type="InterPro" id="IPR022911">
    <property type="entry name" value="Phe_tRNA_ligase_alpha1_bac"/>
</dbReference>
<dbReference type="InterPro" id="IPR002319">
    <property type="entry name" value="Phenylalanyl-tRNA_Synthase"/>
</dbReference>
<dbReference type="InterPro" id="IPR010978">
    <property type="entry name" value="tRNA-bd_arm"/>
</dbReference>
<dbReference type="NCBIfam" id="TIGR00468">
    <property type="entry name" value="pheS"/>
    <property type="match status" value="1"/>
</dbReference>
<dbReference type="PANTHER" id="PTHR11538:SF41">
    <property type="entry name" value="PHENYLALANINE--TRNA LIGASE, MITOCHONDRIAL"/>
    <property type="match status" value="1"/>
</dbReference>
<dbReference type="PANTHER" id="PTHR11538">
    <property type="entry name" value="PHENYLALANYL-TRNA SYNTHETASE"/>
    <property type="match status" value="1"/>
</dbReference>
<dbReference type="Pfam" id="PF02912">
    <property type="entry name" value="Phe_tRNA-synt_N"/>
    <property type="match status" value="1"/>
</dbReference>
<dbReference type="Pfam" id="PF01409">
    <property type="entry name" value="tRNA-synt_2d"/>
    <property type="match status" value="1"/>
</dbReference>
<dbReference type="SUPFAM" id="SSF55681">
    <property type="entry name" value="Class II aaRS and biotin synthetases"/>
    <property type="match status" value="1"/>
</dbReference>
<dbReference type="SUPFAM" id="SSF46589">
    <property type="entry name" value="tRNA-binding arm"/>
    <property type="match status" value="1"/>
</dbReference>
<dbReference type="PROSITE" id="PS50862">
    <property type="entry name" value="AA_TRNA_LIGASE_II"/>
    <property type="match status" value="1"/>
</dbReference>
<proteinExistence type="inferred from homology"/>